<geneLocation type="chloroplast"/>
<sequence length="61" mass="6932">MLNIFSLICICLNSALHSSSFFFAKLPEAYAFFNPIVDFMPVIPVLFFLLALVWQAAVSFR</sequence>
<name>PSBK_DRIGR</name>
<keyword id="KW-0150">Chloroplast</keyword>
<keyword id="KW-0472">Membrane</keyword>
<keyword id="KW-0602">Photosynthesis</keyword>
<keyword id="KW-0604">Photosystem II</keyword>
<keyword id="KW-0934">Plastid</keyword>
<keyword id="KW-0674">Reaction center</keyword>
<keyword id="KW-0793">Thylakoid</keyword>
<keyword id="KW-0812">Transmembrane</keyword>
<keyword id="KW-1133">Transmembrane helix</keyword>
<evidence type="ECO:0000255" key="1">
    <source>
        <dbReference type="HAMAP-Rule" id="MF_00441"/>
    </source>
</evidence>
<organism>
    <name type="scientific">Drimys granadensis</name>
    <dbReference type="NCBI Taxonomy" id="224735"/>
    <lineage>
        <taxon>Eukaryota</taxon>
        <taxon>Viridiplantae</taxon>
        <taxon>Streptophyta</taxon>
        <taxon>Embryophyta</taxon>
        <taxon>Tracheophyta</taxon>
        <taxon>Spermatophyta</taxon>
        <taxon>Magnoliopsida</taxon>
        <taxon>Magnoliidae</taxon>
        <taxon>Canellales</taxon>
        <taxon>Winteraceae</taxon>
        <taxon>Drimys</taxon>
    </lineage>
</organism>
<gene>
    <name evidence="1" type="primary">psbK</name>
</gene>
<accession>Q06H14</accession>
<dbReference type="EMBL" id="DQ887676">
    <property type="protein sequence ID" value="ABH88280.1"/>
    <property type="molecule type" value="Genomic_DNA"/>
</dbReference>
<dbReference type="RefSeq" id="YP_784369.1">
    <property type="nucleotide sequence ID" value="NC_008456.1"/>
</dbReference>
<dbReference type="SMR" id="Q06H14"/>
<dbReference type="GeneID" id="4363628"/>
<dbReference type="GO" id="GO:0009535">
    <property type="term" value="C:chloroplast thylakoid membrane"/>
    <property type="evidence" value="ECO:0007669"/>
    <property type="project" value="UniProtKB-SubCell"/>
</dbReference>
<dbReference type="GO" id="GO:0009539">
    <property type="term" value="C:photosystem II reaction center"/>
    <property type="evidence" value="ECO:0007669"/>
    <property type="project" value="InterPro"/>
</dbReference>
<dbReference type="GO" id="GO:0015979">
    <property type="term" value="P:photosynthesis"/>
    <property type="evidence" value="ECO:0007669"/>
    <property type="project" value="UniProtKB-UniRule"/>
</dbReference>
<dbReference type="HAMAP" id="MF_00441">
    <property type="entry name" value="PSII_PsbK"/>
    <property type="match status" value="1"/>
</dbReference>
<dbReference type="InterPro" id="IPR003687">
    <property type="entry name" value="PSII_PsbK"/>
</dbReference>
<dbReference type="InterPro" id="IPR037270">
    <property type="entry name" value="PSII_PsbK_sf"/>
</dbReference>
<dbReference type="NCBIfam" id="NF002715">
    <property type="entry name" value="PRK02553.1"/>
    <property type="match status" value="1"/>
</dbReference>
<dbReference type="PANTHER" id="PTHR35325">
    <property type="match status" value="1"/>
</dbReference>
<dbReference type="PANTHER" id="PTHR35325:SF1">
    <property type="entry name" value="PHOTOSYSTEM II REACTION CENTER PROTEIN K"/>
    <property type="match status" value="1"/>
</dbReference>
<dbReference type="Pfam" id="PF02533">
    <property type="entry name" value="PsbK"/>
    <property type="match status" value="1"/>
</dbReference>
<dbReference type="SUPFAM" id="SSF161037">
    <property type="entry name" value="Photosystem II reaction center protein K, PsbK"/>
    <property type="match status" value="1"/>
</dbReference>
<feature type="propeptide" id="PRO_0000276138" evidence="1">
    <location>
        <begin position="1"/>
        <end position="24"/>
    </location>
</feature>
<feature type="chain" id="PRO_0000276139" description="Photosystem II reaction center protein K" evidence="1">
    <location>
        <begin position="25"/>
        <end position="61"/>
    </location>
</feature>
<feature type="transmembrane region" description="Helical" evidence="1">
    <location>
        <begin position="32"/>
        <end position="52"/>
    </location>
</feature>
<proteinExistence type="inferred from homology"/>
<protein>
    <recommendedName>
        <fullName evidence="1">Photosystem II reaction center protein K</fullName>
        <shortName evidence="1">PSII-K</shortName>
    </recommendedName>
</protein>
<comment type="function">
    <text evidence="1">One of the components of the core complex of photosystem II (PSII). PSII is a light-driven water:plastoquinone oxidoreductase that uses light energy to abstract electrons from H(2)O, generating O(2) and a proton gradient subsequently used for ATP formation. It consists of a core antenna complex that captures photons, and an electron transfer chain that converts photonic excitation into a charge separation.</text>
</comment>
<comment type="subunit">
    <text evidence="1">PSII is composed of 1 copy each of membrane proteins PsbA, PsbB, PsbC, PsbD, PsbE, PsbF, PsbH, PsbI, PsbJ, PsbK, PsbL, PsbM, PsbT, PsbX, PsbY, PsbZ, Psb30/Ycf12, at least 3 peripheral proteins of the oxygen-evolving complex and a large number of cofactors. It forms dimeric complexes.</text>
</comment>
<comment type="subcellular location">
    <subcellularLocation>
        <location evidence="1">Plastid</location>
        <location evidence="1">Chloroplast thylakoid membrane</location>
        <topology evidence="1">Single-pass membrane protein</topology>
    </subcellularLocation>
</comment>
<comment type="similarity">
    <text evidence="1">Belongs to the PsbK family.</text>
</comment>
<reference key="1">
    <citation type="journal article" date="2006" name="BMC Evol. Biol.">
        <title>Complete plastid genome sequences of Drimys, Liriodendron, and Piper: implications for the phylogenetic relationships of magnoliids.</title>
        <authorList>
            <person name="Cai Z."/>
            <person name="Penaflor C."/>
            <person name="Kuehl J.V."/>
            <person name="Leebens-Mack J."/>
            <person name="Carlson J.E."/>
            <person name="dePamphilis C.W."/>
            <person name="Boore J.L."/>
            <person name="Jansen R.K."/>
        </authorList>
    </citation>
    <scope>NUCLEOTIDE SEQUENCE [LARGE SCALE GENOMIC DNA]</scope>
</reference>